<gene>
    <name evidence="1" type="primary">pyrC</name>
    <name type="ordered locus">PST_1201</name>
</gene>
<feature type="chain" id="PRO_1000024040" description="Dihydroorotase">
    <location>
        <begin position="1"/>
        <end position="347"/>
    </location>
</feature>
<feature type="active site" evidence="1">
    <location>
        <position position="248"/>
    </location>
</feature>
<feature type="binding site" evidence="1">
    <location>
        <position position="14"/>
    </location>
    <ligand>
        <name>Zn(2+)</name>
        <dbReference type="ChEBI" id="CHEBI:29105"/>
        <label>1</label>
    </ligand>
</feature>
<feature type="binding site" evidence="1">
    <location>
        <begin position="16"/>
        <end position="18"/>
    </location>
    <ligand>
        <name>substrate</name>
    </ligand>
</feature>
<feature type="binding site" evidence="1">
    <location>
        <position position="16"/>
    </location>
    <ligand>
        <name>Zn(2+)</name>
        <dbReference type="ChEBI" id="CHEBI:29105"/>
        <label>1</label>
    </ligand>
</feature>
<feature type="binding site" evidence="1">
    <location>
        <position position="42"/>
    </location>
    <ligand>
        <name>substrate</name>
    </ligand>
</feature>
<feature type="binding site" description="via carbamate group" evidence="1">
    <location>
        <position position="100"/>
    </location>
    <ligand>
        <name>Zn(2+)</name>
        <dbReference type="ChEBI" id="CHEBI:29105"/>
        <label>1</label>
    </ligand>
</feature>
<feature type="binding site" description="via carbamate group" evidence="1">
    <location>
        <position position="100"/>
    </location>
    <ligand>
        <name>Zn(2+)</name>
        <dbReference type="ChEBI" id="CHEBI:29105"/>
        <label>2</label>
    </ligand>
</feature>
<feature type="binding site" evidence="1">
    <location>
        <position position="137"/>
    </location>
    <ligand>
        <name>substrate</name>
    </ligand>
</feature>
<feature type="binding site" evidence="1">
    <location>
        <position position="137"/>
    </location>
    <ligand>
        <name>Zn(2+)</name>
        <dbReference type="ChEBI" id="CHEBI:29105"/>
        <label>2</label>
    </ligand>
</feature>
<feature type="binding site" evidence="1">
    <location>
        <position position="175"/>
    </location>
    <ligand>
        <name>Zn(2+)</name>
        <dbReference type="ChEBI" id="CHEBI:29105"/>
        <label>2</label>
    </ligand>
</feature>
<feature type="binding site" evidence="1">
    <location>
        <position position="220"/>
    </location>
    <ligand>
        <name>substrate</name>
    </ligand>
</feature>
<feature type="binding site" evidence="1">
    <location>
        <position position="248"/>
    </location>
    <ligand>
        <name>Zn(2+)</name>
        <dbReference type="ChEBI" id="CHEBI:29105"/>
        <label>1</label>
    </ligand>
</feature>
<feature type="binding site" evidence="1">
    <location>
        <position position="252"/>
    </location>
    <ligand>
        <name>substrate</name>
    </ligand>
</feature>
<feature type="binding site" evidence="1">
    <location>
        <position position="264"/>
    </location>
    <ligand>
        <name>substrate</name>
    </ligand>
</feature>
<feature type="modified residue" description="N6-carboxylysine" evidence="1">
    <location>
        <position position="100"/>
    </location>
</feature>
<accession>A4VIU5</accession>
<protein>
    <recommendedName>
        <fullName evidence="1">Dihydroorotase</fullName>
        <shortName evidence="1">DHOase</shortName>
        <ecNumber evidence="1">3.5.2.3</ecNumber>
    </recommendedName>
</protein>
<comment type="function">
    <text evidence="1">Catalyzes the reversible cyclization of carbamoyl aspartate to dihydroorotate.</text>
</comment>
<comment type="catalytic activity">
    <reaction evidence="1">
        <text>(S)-dihydroorotate + H2O = N-carbamoyl-L-aspartate + H(+)</text>
        <dbReference type="Rhea" id="RHEA:24296"/>
        <dbReference type="ChEBI" id="CHEBI:15377"/>
        <dbReference type="ChEBI" id="CHEBI:15378"/>
        <dbReference type="ChEBI" id="CHEBI:30864"/>
        <dbReference type="ChEBI" id="CHEBI:32814"/>
        <dbReference type="EC" id="3.5.2.3"/>
    </reaction>
</comment>
<comment type="cofactor">
    <cofactor evidence="1">
        <name>Zn(2+)</name>
        <dbReference type="ChEBI" id="CHEBI:29105"/>
    </cofactor>
    <text evidence="1">Binds 2 Zn(2+) ions per subunit.</text>
</comment>
<comment type="pathway">
    <text evidence="1">Pyrimidine metabolism; UMP biosynthesis via de novo pathway; (S)-dihydroorotate from bicarbonate: step 3/3.</text>
</comment>
<comment type="subunit">
    <text evidence="1">Homodimer.</text>
</comment>
<comment type="similarity">
    <text evidence="1">Belongs to the metallo-dependent hydrolases superfamily. DHOase family. Class II DHOase subfamily.</text>
</comment>
<proteinExistence type="inferred from homology"/>
<keyword id="KW-0378">Hydrolase</keyword>
<keyword id="KW-0479">Metal-binding</keyword>
<keyword id="KW-0665">Pyrimidine biosynthesis</keyword>
<keyword id="KW-1185">Reference proteome</keyword>
<keyword id="KW-0862">Zinc</keyword>
<evidence type="ECO:0000255" key="1">
    <source>
        <dbReference type="HAMAP-Rule" id="MF_00219"/>
    </source>
</evidence>
<reference key="1">
    <citation type="journal article" date="2008" name="Proc. Natl. Acad. Sci. U.S.A.">
        <title>Nitrogen fixation island and rhizosphere competence traits in the genome of root-associated Pseudomonas stutzeri A1501.</title>
        <authorList>
            <person name="Yan Y."/>
            <person name="Yang J."/>
            <person name="Dou Y."/>
            <person name="Chen M."/>
            <person name="Ping S."/>
            <person name="Peng J."/>
            <person name="Lu W."/>
            <person name="Zhang W."/>
            <person name="Yao Z."/>
            <person name="Li H."/>
            <person name="Liu W."/>
            <person name="He S."/>
            <person name="Geng L."/>
            <person name="Zhang X."/>
            <person name="Yang F."/>
            <person name="Yu H."/>
            <person name="Zhan Y."/>
            <person name="Li D."/>
            <person name="Lin Z."/>
            <person name="Wang Y."/>
            <person name="Elmerich C."/>
            <person name="Lin M."/>
            <person name="Jin Q."/>
        </authorList>
    </citation>
    <scope>NUCLEOTIDE SEQUENCE [LARGE SCALE GENOMIC DNA]</scope>
    <source>
        <strain>A1501</strain>
    </source>
</reference>
<dbReference type="EC" id="3.5.2.3" evidence="1"/>
<dbReference type="EMBL" id="CP000304">
    <property type="protein sequence ID" value="ABP78896.1"/>
    <property type="molecule type" value="Genomic_DNA"/>
</dbReference>
<dbReference type="RefSeq" id="WP_011912383.1">
    <property type="nucleotide sequence ID" value="NC_009434.1"/>
</dbReference>
<dbReference type="SMR" id="A4VIU5"/>
<dbReference type="MEROPS" id="M38.A02"/>
<dbReference type="KEGG" id="psa:PST_1201"/>
<dbReference type="eggNOG" id="COG0418">
    <property type="taxonomic scope" value="Bacteria"/>
</dbReference>
<dbReference type="HOGENOM" id="CLU_041558_1_0_6"/>
<dbReference type="UniPathway" id="UPA00070">
    <property type="reaction ID" value="UER00117"/>
</dbReference>
<dbReference type="Proteomes" id="UP000000233">
    <property type="component" value="Chromosome"/>
</dbReference>
<dbReference type="GO" id="GO:0005829">
    <property type="term" value="C:cytosol"/>
    <property type="evidence" value="ECO:0007669"/>
    <property type="project" value="TreeGrafter"/>
</dbReference>
<dbReference type="GO" id="GO:0004151">
    <property type="term" value="F:dihydroorotase activity"/>
    <property type="evidence" value="ECO:0007669"/>
    <property type="project" value="UniProtKB-UniRule"/>
</dbReference>
<dbReference type="GO" id="GO:0008270">
    <property type="term" value="F:zinc ion binding"/>
    <property type="evidence" value="ECO:0007669"/>
    <property type="project" value="UniProtKB-UniRule"/>
</dbReference>
<dbReference type="GO" id="GO:0006207">
    <property type="term" value="P:'de novo' pyrimidine nucleobase biosynthetic process"/>
    <property type="evidence" value="ECO:0007669"/>
    <property type="project" value="TreeGrafter"/>
</dbReference>
<dbReference type="GO" id="GO:0044205">
    <property type="term" value="P:'de novo' UMP biosynthetic process"/>
    <property type="evidence" value="ECO:0007669"/>
    <property type="project" value="UniProtKB-UniRule"/>
</dbReference>
<dbReference type="CDD" id="cd01294">
    <property type="entry name" value="DHOase"/>
    <property type="match status" value="1"/>
</dbReference>
<dbReference type="FunFam" id="3.20.20.140:FF:000006">
    <property type="entry name" value="Dihydroorotase"/>
    <property type="match status" value="1"/>
</dbReference>
<dbReference type="Gene3D" id="3.20.20.140">
    <property type="entry name" value="Metal-dependent hydrolases"/>
    <property type="match status" value="1"/>
</dbReference>
<dbReference type="HAMAP" id="MF_00219">
    <property type="entry name" value="PyrC_classII"/>
    <property type="match status" value="1"/>
</dbReference>
<dbReference type="InterPro" id="IPR006680">
    <property type="entry name" value="Amidohydro-rel"/>
</dbReference>
<dbReference type="InterPro" id="IPR004721">
    <property type="entry name" value="DHOdimr"/>
</dbReference>
<dbReference type="InterPro" id="IPR002195">
    <property type="entry name" value="Dihydroorotase_CS"/>
</dbReference>
<dbReference type="InterPro" id="IPR032466">
    <property type="entry name" value="Metal_Hydrolase"/>
</dbReference>
<dbReference type="NCBIfam" id="TIGR00856">
    <property type="entry name" value="pyrC_dimer"/>
    <property type="match status" value="1"/>
</dbReference>
<dbReference type="PANTHER" id="PTHR43137">
    <property type="entry name" value="DIHYDROOROTASE"/>
    <property type="match status" value="1"/>
</dbReference>
<dbReference type="PANTHER" id="PTHR43137:SF1">
    <property type="entry name" value="DIHYDROOROTASE"/>
    <property type="match status" value="1"/>
</dbReference>
<dbReference type="Pfam" id="PF01979">
    <property type="entry name" value="Amidohydro_1"/>
    <property type="match status" value="1"/>
</dbReference>
<dbReference type="PIRSF" id="PIRSF001237">
    <property type="entry name" value="DHOdimr"/>
    <property type="match status" value="1"/>
</dbReference>
<dbReference type="SUPFAM" id="SSF51556">
    <property type="entry name" value="Metallo-dependent hydrolases"/>
    <property type="match status" value="1"/>
</dbReference>
<dbReference type="PROSITE" id="PS00482">
    <property type="entry name" value="DIHYDROOROTASE_1"/>
    <property type="match status" value="1"/>
</dbReference>
<dbReference type="PROSITE" id="PS00483">
    <property type="entry name" value="DIHYDROOROTASE_2"/>
    <property type="match status" value="1"/>
</dbReference>
<sequence>MSARLTLLRPDDWHIHLRDGAALPHTVADAARQFARAIIMPNLVPPVRNADEAEAYRQRILAARPAGSRFEPLMVLYLTDSTTPDDIRRAKASGFVHAAKLYPAGATTNSASGVTAIDNIFGVLETMAEVGLPLLVHGEVTRSEIDIFDREKYFIDEQLSRVTARFPTLKVVFEHITTRDAVQFVQAAGANVGATITAHHLLYNRNHMLVGGIRPHLFCLPVLKRNLHQEALLDAATSGSPKFFLGTDSAPHAQHAKEAACGCAGCYTAFAAIELYAEAFEQRQALDKLEPFASHFGPDFYGLPRNTDEITLVRTEWDVPASLPFGEQVVVPLRAGERLHWRLESNA</sequence>
<name>PYRC_STUS1</name>
<organism>
    <name type="scientific">Stutzerimonas stutzeri (strain A1501)</name>
    <name type="common">Pseudomonas stutzeri</name>
    <dbReference type="NCBI Taxonomy" id="379731"/>
    <lineage>
        <taxon>Bacteria</taxon>
        <taxon>Pseudomonadati</taxon>
        <taxon>Pseudomonadota</taxon>
        <taxon>Gammaproteobacteria</taxon>
        <taxon>Pseudomonadales</taxon>
        <taxon>Pseudomonadaceae</taxon>
        <taxon>Stutzerimonas</taxon>
    </lineage>
</organism>